<feature type="chain" id="PRO_0000096892" description="Protein N-terminal and lysine N-methyltransferase EFM7">
    <location>
        <begin position="1"/>
        <end position="256"/>
    </location>
</feature>
<feature type="region of interest" description="Disordered" evidence="2">
    <location>
        <begin position="1"/>
        <end position="26"/>
    </location>
</feature>
<feature type="binding site" evidence="1">
    <location>
        <position position="64"/>
    </location>
    <ligand>
        <name>S-adenosyl-L-methionine</name>
        <dbReference type="ChEBI" id="CHEBI:59789"/>
    </ligand>
</feature>
<feature type="binding site" evidence="1">
    <location>
        <begin position="90"/>
        <end position="92"/>
    </location>
    <ligand>
        <name>S-adenosyl-L-methionine</name>
        <dbReference type="ChEBI" id="CHEBI:59789"/>
    </ligand>
</feature>
<feature type="binding site" evidence="1">
    <location>
        <position position="112"/>
    </location>
    <ligand>
        <name>S-adenosyl-L-methionine</name>
        <dbReference type="ChEBI" id="CHEBI:59789"/>
    </ligand>
</feature>
<feature type="binding site" evidence="1">
    <location>
        <position position="145"/>
    </location>
    <ligand>
        <name>S-adenosyl-L-methionine</name>
        <dbReference type="ChEBI" id="CHEBI:59789"/>
    </ligand>
</feature>
<feature type="binding site" evidence="1">
    <location>
        <position position="168"/>
    </location>
    <ligand>
        <name>S-adenosyl-L-methionine</name>
        <dbReference type="ChEBI" id="CHEBI:59789"/>
    </ligand>
</feature>
<keyword id="KW-0963">Cytoplasm</keyword>
<keyword id="KW-0489">Methyltransferase</keyword>
<keyword id="KW-1185">Reference proteome</keyword>
<keyword id="KW-0949">S-adenosyl-L-methionine</keyword>
<keyword id="KW-0808">Transferase</keyword>
<reference key="1">
    <citation type="journal article" date="2004" name="Nature">
        <title>Genome evolution in yeasts.</title>
        <authorList>
            <person name="Dujon B."/>
            <person name="Sherman D."/>
            <person name="Fischer G."/>
            <person name="Durrens P."/>
            <person name="Casaregola S."/>
            <person name="Lafontaine I."/>
            <person name="de Montigny J."/>
            <person name="Marck C."/>
            <person name="Neuveglise C."/>
            <person name="Talla E."/>
            <person name="Goffard N."/>
            <person name="Frangeul L."/>
            <person name="Aigle M."/>
            <person name="Anthouard V."/>
            <person name="Babour A."/>
            <person name="Barbe V."/>
            <person name="Barnay S."/>
            <person name="Blanchin S."/>
            <person name="Beckerich J.-M."/>
            <person name="Beyne E."/>
            <person name="Bleykasten C."/>
            <person name="Boisrame A."/>
            <person name="Boyer J."/>
            <person name="Cattolico L."/>
            <person name="Confanioleri F."/>
            <person name="de Daruvar A."/>
            <person name="Despons L."/>
            <person name="Fabre E."/>
            <person name="Fairhead C."/>
            <person name="Ferry-Dumazet H."/>
            <person name="Groppi A."/>
            <person name="Hantraye F."/>
            <person name="Hennequin C."/>
            <person name="Jauniaux N."/>
            <person name="Joyet P."/>
            <person name="Kachouri R."/>
            <person name="Kerrest A."/>
            <person name="Koszul R."/>
            <person name="Lemaire M."/>
            <person name="Lesur I."/>
            <person name="Ma L."/>
            <person name="Muller H."/>
            <person name="Nicaud J.-M."/>
            <person name="Nikolski M."/>
            <person name="Oztas S."/>
            <person name="Ozier-Kalogeropoulos O."/>
            <person name="Pellenz S."/>
            <person name="Potier S."/>
            <person name="Richard G.-F."/>
            <person name="Straub M.-L."/>
            <person name="Suleau A."/>
            <person name="Swennen D."/>
            <person name="Tekaia F."/>
            <person name="Wesolowski-Louvel M."/>
            <person name="Westhof E."/>
            <person name="Wirth B."/>
            <person name="Zeniou-Meyer M."/>
            <person name="Zivanovic Y."/>
            <person name="Bolotin-Fukuhara M."/>
            <person name="Thierry A."/>
            <person name="Bouchier C."/>
            <person name="Caudron B."/>
            <person name="Scarpelli C."/>
            <person name="Gaillardin C."/>
            <person name="Weissenbach J."/>
            <person name="Wincker P."/>
            <person name="Souciet J.-L."/>
        </authorList>
    </citation>
    <scope>NUCLEOTIDE SEQUENCE [LARGE SCALE GENOMIC DNA]</scope>
    <source>
        <strain>ATCC 2001 / BCRC 20586 / JCM 3761 / NBRC 0622 / NRRL Y-65 / CBS 138</strain>
    </source>
</reference>
<proteinExistence type="inferred from homology"/>
<gene>
    <name evidence="1" type="primary">EFM7</name>
    <name type="synonym">NNT1</name>
    <name type="ordered locus">CAGL0M09801g</name>
</gene>
<comment type="function">
    <text evidence="1">S-adenosyl-L-methionine-dependent protein methyltransferase that trimethylates the N-terminal glycine 'Gly-2' of elongation factor 1-alpha, before also catalyzing the mono- and dimethylation of 'Lys-3'.</text>
</comment>
<comment type="subcellular location">
    <subcellularLocation>
        <location evidence="1">Cytoplasm</location>
    </subcellularLocation>
</comment>
<comment type="similarity">
    <text evidence="1">Belongs to the class I-like SAM-binding methyltransferase superfamily. EFM7 family.</text>
</comment>
<sequence>MSDTESLNDALGLFDEPEDFRPEKPKEHYANYERIDVPDISKSKITNLKLQLVGSSPLWGHLLWNAGIYTARHLDKYPELVSNKNVLELGAASALPSLVAGLIGAKRAVVTDYPDADLMANIQYNVNTIIPDELKENVRVEGYIWGNEYDPLTIHLDGDKKFDLIILSDLVFNHNQHDKLLQTTKDLLATNGKALVVFSPHRPHLLEADLQFFETCKEYGLTPEKIEMVNWKPMFEEDEETAEVRSRVYAYYMTHA</sequence>
<name>EFM7_CANGA</name>
<organism>
    <name type="scientific">Candida glabrata (strain ATCC 2001 / BCRC 20586 / JCM 3761 / NBRC 0622 / NRRL Y-65 / CBS 138)</name>
    <name type="common">Yeast</name>
    <name type="synonym">Nakaseomyces glabratus</name>
    <dbReference type="NCBI Taxonomy" id="284593"/>
    <lineage>
        <taxon>Eukaryota</taxon>
        <taxon>Fungi</taxon>
        <taxon>Dikarya</taxon>
        <taxon>Ascomycota</taxon>
        <taxon>Saccharomycotina</taxon>
        <taxon>Saccharomycetes</taxon>
        <taxon>Saccharomycetales</taxon>
        <taxon>Saccharomycetaceae</taxon>
        <taxon>Nakaseomyces</taxon>
    </lineage>
</organism>
<dbReference type="EC" id="2.1.1.-" evidence="1"/>
<dbReference type="EMBL" id="CR380959">
    <property type="protein sequence ID" value="CAG62750.1"/>
    <property type="molecule type" value="Genomic_DNA"/>
</dbReference>
<dbReference type="RefSeq" id="XP_449772.1">
    <property type="nucleotide sequence ID" value="XM_449772.1"/>
</dbReference>
<dbReference type="SMR" id="Q6FJ22"/>
<dbReference type="FunCoup" id="Q6FJ22">
    <property type="interactions" value="154"/>
</dbReference>
<dbReference type="STRING" id="284593.Q6FJ22"/>
<dbReference type="EnsemblFungi" id="CAGL0M09801g-T">
    <property type="protein sequence ID" value="CAGL0M09801g-T-p1"/>
    <property type="gene ID" value="CAGL0M09801g"/>
</dbReference>
<dbReference type="KEGG" id="cgr:2891336"/>
<dbReference type="CGD" id="CAL0136847">
    <property type="gene designation" value="CAGL0M09801g"/>
</dbReference>
<dbReference type="VEuPathDB" id="FungiDB:B1J91_M09801g"/>
<dbReference type="VEuPathDB" id="FungiDB:CAGL0M09801g"/>
<dbReference type="eggNOG" id="KOG2920">
    <property type="taxonomic scope" value="Eukaryota"/>
</dbReference>
<dbReference type="HOGENOM" id="CLU_032409_0_0_1"/>
<dbReference type="InParanoid" id="Q6FJ22"/>
<dbReference type="OMA" id="VGHNPLW"/>
<dbReference type="Proteomes" id="UP000002428">
    <property type="component" value="Chromosome M"/>
</dbReference>
<dbReference type="GO" id="GO:0005737">
    <property type="term" value="C:cytoplasm"/>
    <property type="evidence" value="ECO:0007669"/>
    <property type="project" value="UniProtKB-SubCell"/>
</dbReference>
<dbReference type="GO" id="GO:0071885">
    <property type="term" value="F:N-terminal protein N-methyltransferase activity"/>
    <property type="evidence" value="ECO:0007669"/>
    <property type="project" value="UniProtKB-UniRule"/>
</dbReference>
<dbReference type="GO" id="GO:0016279">
    <property type="term" value="F:protein-lysine N-methyltransferase activity"/>
    <property type="evidence" value="ECO:0007669"/>
    <property type="project" value="UniProtKB-UniRule"/>
</dbReference>
<dbReference type="GO" id="GO:0032259">
    <property type="term" value="P:methylation"/>
    <property type="evidence" value="ECO:0007669"/>
    <property type="project" value="UniProtKB-KW"/>
</dbReference>
<dbReference type="GO" id="GO:0000183">
    <property type="term" value="P:rDNA heterochromatin formation"/>
    <property type="evidence" value="ECO:0007669"/>
    <property type="project" value="EnsemblFungi"/>
</dbReference>
<dbReference type="CDD" id="cd02440">
    <property type="entry name" value="AdoMet_MTases"/>
    <property type="match status" value="1"/>
</dbReference>
<dbReference type="Gene3D" id="3.40.50.150">
    <property type="entry name" value="Vaccinia Virus protein VP39"/>
    <property type="match status" value="1"/>
</dbReference>
<dbReference type="HAMAP" id="MF_03223">
    <property type="entry name" value="Methyltr_EFM7"/>
    <property type="match status" value="1"/>
</dbReference>
<dbReference type="InterPro" id="IPR025784">
    <property type="entry name" value="EFM7"/>
</dbReference>
<dbReference type="InterPro" id="IPR019410">
    <property type="entry name" value="Methyltransf_16"/>
</dbReference>
<dbReference type="InterPro" id="IPR029063">
    <property type="entry name" value="SAM-dependent_MTases_sf"/>
</dbReference>
<dbReference type="PANTHER" id="PTHR14614">
    <property type="entry name" value="HEPATOCELLULAR CARCINOMA-ASSOCIATED ANTIGEN"/>
    <property type="match status" value="1"/>
</dbReference>
<dbReference type="PANTHER" id="PTHR14614:SF10">
    <property type="entry name" value="PROTEIN N-TERMINAL AND LYSINE N-METHYLTRANSFERASE EFM7"/>
    <property type="match status" value="1"/>
</dbReference>
<dbReference type="Pfam" id="PF10294">
    <property type="entry name" value="Methyltransf_16"/>
    <property type="match status" value="1"/>
</dbReference>
<dbReference type="SUPFAM" id="SSF53335">
    <property type="entry name" value="S-adenosyl-L-methionine-dependent methyltransferases"/>
    <property type="match status" value="1"/>
</dbReference>
<dbReference type="PROSITE" id="PS51560">
    <property type="entry name" value="SAM_MT_NNT1"/>
    <property type="match status" value="1"/>
</dbReference>
<protein>
    <recommendedName>
        <fullName evidence="1">Protein N-terminal and lysine N-methyltransferase EFM7</fullName>
        <ecNumber evidence="1">2.1.1.-</ecNumber>
    </recommendedName>
    <alternativeName>
        <fullName evidence="1">Elongation factor methyltransferase 7</fullName>
    </alternativeName>
</protein>
<accession>Q6FJ22</accession>
<evidence type="ECO:0000255" key="1">
    <source>
        <dbReference type="HAMAP-Rule" id="MF_03223"/>
    </source>
</evidence>
<evidence type="ECO:0000256" key="2">
    <source>
        <dbReference type="SAM" id="MobiDB-lite"/>
    </source>
</evidence>